<keyword id="KW-1185">Reference proteome</keyword>
<gene>
    <name type="ordered locus">At5g25290</name>
    <name type="ORF">F18G18.30</name>
</gene>
<accession>Q4PSE7</accession>
<sequence length="397" mass="46334">MDTLIIVGSMVTLWSEIPMDILRSVFERLSFVDLHRAKIVCSHWYSCSKQSFLRKTRSPLVILFSDDGDCTLYNPEEARVYKSKRDLSRYRFLANSGNWFLVLDPRSNLYIIDLFSEKKINLPPLDSFKGYKYNLKKVGARKFKELVSEYPTSFHHHAKDLRGLLWVDEKKEEYVVVWYFRNKYTMDSLAFCKNGEDHYREMPTHYGLHDISDMVLQRGDHIYLSTSCKYLQKLDLSRQEGIRTKNDDIISRYQLPCRPTNYKLVYDAKCWCSYNIAVTSSGEVLFVLSIFSQSTRRRIFFLYKEDPNPSPSEVIYKNLVEVDSLGDEALLLDLGITVPADSDLGIEPNSIYFTRHDRVANQKRSSPDICVFNIVTKTLKRFPGLSSLKDARWFLPS</sequence>
<reference key="1">
    <citation type="journal article" date="2000" name="Nature">
        <title>Sequence and analysis of chromosome 5 of the plant Arabidopsis thaliana.</title>
        <authorList>
            <person name="Tabata S."/>
            <person name="Kaneko T."/>
            <person name="Nakamura Y."/>
            <person name="Kotani H."/>
            <person name="Kato T."/>
            <person name="Asamizu E."/>
            <person name="Miyajima N."/>
            <person name="Sasamoto S."/>
            <person name="Kimura T."/>
            <person name="Hosouchi T."/>
            <person name="Kawashima K."/>
            <person name="Kohara M."/>
            <person name="Matsumoto M."/>
            <person name="Matsuno A."/>
            <person name="Muraki A."/>
            <person name="Nakayama S."/>
            <person name="Nakazaki N."/>
            <person name="Naruo K."/>
            <person name="Okumura S."/>
            <person name="Shinpo S."/>
            <person name="Takeuchi C."/>
            <person name="Wada T."/>
            <person name="Watanabe A."/>
            <person name="Yamada M."/>
            <person name="Yasuda M."/>
            <person name="Sato S."/>
            <person name="de la Bastide M."/>
            <person name="Huang E."/>
            <person name="Spiegel L."/>
            <person name="Gnoj L."/>
            <person name="O'Shaughnessy A."/>
            <person name="Preston R."/>
            <person name="Habermann K."/>
            <person name="Murray J."/>
            <person name="Johnson D."/>
            <person name="Rohlfing T."/>
            <person name="Nelson J."/>
            <person name="Stoneking T."/>
            <person name="Pepin K."/>
            <person name="Spieth J."/>
            <person name="Sekhon M."/>
            <person name="Armstrong J."/>
            <person name="Becker M."/>
            <person name="Belter E."/>
            <person name="Cordum H."/>
            <person name="Cordes M."/>
            <person name="Courtney L."/>
            <person name="Courtney W."/>
            <person name="Dante M."/>
            <person name="Du H."/>
            <person name="Edwards J."/>
            <person name="Fryman J."/>
            <person name="Haakensen B."/>
            <person name="Lamar E."/>
            <person name="Latreille P."/>
            <person name="Leonard S."/>
            <person name="Meyer R."/>
            <person name="Mulvaney E."/>
            <person name="Ozersky P."/>
            <person name="Riley A."/>
            <person name="Strowmatt C."/>
            <person name="Wagner-McPherson C."/>
            <person name="Wollam A."/>
            <person name="Yoakum M."/>
            <person name="Bell M."/>
            <person name="Dedhia N."/>
            <person name="Parnell L."/>
            <person name="Shah R."/>
            <person name="Rodriguez M."/>
            <person name="Hoon See L."/>
            <person name="Vil D."/>
            <person name="Baker J."/>
            <person name="Kirchoff K."/>
            <person name="Toth K."/>
            <person name="King L."/>
            <person name="Bahret A."/>
            <person name="Miller B."/>
            <person name="Marra M.A."/>
            <person name="Martienssen R."/>
            <person name="McCombie W.R."/>
            <person name="Wilson R.K."/>
            <person name="Murphy G."/>
            <person name="Bancroft I."/>
            <person name="Volckaert G."/>
            <person name="Wambutt R."/>
            <person name="Duesterhoeft A."/>
            <person name="Stiekema W."/>
            <person name="Pohl T."/>
            <person name="Entian K.-D."/>
            <person name="Terryn N."/>
            <person name="Hartley N."/>
            <person name="Bent E."/>
            <person name="Johnson S."/>
            <person name="Langham S.-A."/>
            <person name="McCullagh B."/>
            <person name="Robben J."/>
            <person name="Grymonprez B."/>
            <person name="Zimmermann W."/>
            <person name="Ramsperger U."/>
            <person name="Wedler H."/>
            <person name="Balke K."/>
            <person name="Wedler E."/>
            <person name="Peters S."/>
            <person name="van Staveren M."/>
            <person name="Dirkse W."/>
            <person name="Mooijman P."/>
            <person name="Klein Lankhorst R."/>
            <person name="Weitzenegger T."/>
            <person name="Bothe G."/>
            <person name="Rose M."/>
            <person name="Hauf J."/>
            <person name="Berneiser S."/>
            <person name="Hempel S."/>
            <person name="Feldpausch M."/>
            <person name="Lamberth S."/>
            <person name="Villarroel R."/>
            <person name="Gielen J."/>
            <person name="Ardiles W."/>
            <person name="Bents O."/>
            <person name="Lemcke K."/>
            <person name="Kolesov G."/>
            <person name="Mayer K.F.X."/>
            <person name="Rudd S."/>
            <person name="Schoof H."/>
            <person name="Schueller C."/>
            <person name="Zaccaria P."/>
            <person name="Mewes H.-W."/>
            <person name="Bevan M."/>
            <person name="Fransz P.F."/>
        </authorList>
    </citation>
    <scope>NUCLEOTIDE SEQUENCE [LARGE SCALE GENOMIC DNA]</scope>
    <source>
        <strain>cv. Columbia</strain>
    </source>
</reference>
<reference key="2">
    <citation type="journal article" date="2017" name="Plant J.">
        <title>Araport11: a complete reannotation of the Arabidopsis thaliana reference genome.</title>
        <authorList>
            <person name="Cheng C.Y."/>
            <person name="Krishnakumar V."/>
            <person name="Chan A.P."/>
            <person name="Thibaud-Nissen F."/>
            <person name="Schobel S."/>
            <person name="Town C.D."/>
        </authorList>
    </citation>
    <scope>GENOME REANNOTATION</scope>
    <source>
        <strain>cv. Columbia</strain>
    </source>
</reference>
<reference key="3">
    <citation type="submission" date="2005-05" db="EMBL/GenBank/DDBJ databases">
        <authorList>
            <person name="Underwood B.A."/>
            <person name="Xiao Y.-L."/>
            <person name="Moskal W.A. Jr."/>
            <person name="Monaghan E.L."/>
            <person name="Wang W."/>
            <person name="Redman J.C."/>
            <person name="Wu H.C."/>
            <person name="Utterback T."/>
            <person name="Town C.D."/>
        </authorList>
    </citation>
    <scope>NUCLEOTIDE SEQUENCE [LARGE SCALE MRNA]</scope>
    <source>
        <strain>cv. Columbia</strain>
    </source>
</reference>
<protein>
    <recommendedName>
        <fullName>F-box protein At5g25290</fullName>
    </recommendedName>
</protein>
<evidence type="ECO:0000255" key="1">
    <source>
        <dbReference type="PROSITE-ProRule" id="PRU00080"/>
    </source>
</evidence>
<name>FB262_ARATH</name>
<dbReference type="EMBL" id="AC006258">
    <property type="status" value="NOT_ANNOTATED_CDS"/>
    <property type="molecule type" value="Genomic_DNA"/>
</dbReference>
<dbReference type="EMBL" id="CP002688">
    <property type="protein sequence ID" value="AED93423.1"/>
    <property type="molecule type" value="Genomic_DNA"/>
</dbReference>
<dbReference type="EMBL" id="DQ056689">
    <property type="protein sequence ID" value="AAY78835.1"/>
    <property type="molecule type" value="mRNA"/>
</dbReference>
<dbReference type="RefSeq" id="NP_197911.1">
    <property type="nucleotide sequence ID" value="NM_122438.2"/>
</dbReference>
<dbReference type="FunCoup" id="Q4PSE7">
    <property type="interactions" value="31"/>
</dbReference>
<dbReference type="PaxDb" id="3702-AT5G25290.1"/>
<dbReference type="EnsemblPlants" id="AT5G25290.1">
    <property type="protein sequence ID" value="AT5G25290.1"/>
    <property type="gene ID" value="AT5G25290"/>
</dbReference>
<dbReference type="GeneID" id="832601"/>
<dbReference type="Gramene" id="AT5G25290.1">
    <property type="protein sequence ID" value="AT5G25290.1"/>
    <property type="gene ID" value="AT5G25290"/>
</dbReference>
<dbReference type="KEGG" id="ath:AT5G25290"/>
<dbReference type="Araport" id="AT5G25290"/>
<dbReference type="TAIR" id="AT5G25290">
    <property type="gene designation" value="ATFDB35"/>
</dbReference>
<dbReference type="HOGENOM" id="CLU_019286_7_1_1"/>
<dbReference type="InParanoid" id="Q4PSE7"/>
<dbReference type="OMA" id="KDYVVVW"/>
<dbReference type="PhylomeDB" id="Q4PSE7"/>
<dbReference type="PRO" id="PR:Q4PSE7"/>
<dbReference type="Proteomes" id="UP000006548">
    <property type="component" value="Chromosome 5"/>
</dbReference>
<dbReference type="ExpressionAtlas" id="Q4PSE7">
    <property type="expression patterns" value="baseline and differential"/>
</dbReference>
<dbReference type="CDD" id="cd09917">
    <property type="entry name" value="F-box_SF"/>
    <property type="match status" value="1"/>
</dbReference>
<dbReference type="Gene3D" id="1.20.1280.50">
    <property type="match status" value="1"/>
</dbReference>
<dbReference type="InterPro" id="IPR036047">
    <property type="entry name" value="F-box-like_dom_sf"/>
</dbReference>
<dbReference type="InterPro" id="IPR050942">
    <property type="entry name" value="F-box_BR-signaling"/>
</dbReference>
<dbReference type="InterPro" id="IPR001810">
    <property type="entry name" value="F-box_dom"/>
</dbReference>
<dbReference type="InterPro" id="IPR005174">
    <property type="entry name" value="KIB1-4_b-propeller"/>
</dbReference>
<dbReference type="PANTHER" id="PTHR44259:SF31">
    <property type="entry name" value="F-BOX FAMILY PROTEIN"/>
    <property type="match status" value="1"/>
</dbReference>
<dbReference type="PANTHER" id="PTHR44259">
    <property type="entry name" value="OS07G0183000 PROTEIN-RELATED"/>
    <property type="match status" value="1"/>
</dbReference>
<dbReference type="Pfam" id="PF03478">
    <property type="entry name" value="Beta-prop_KIB1-4"/>
    <property type="match status" value="1"/>
</dbReference>
<dbReference type="Pfam" id="PF00646">
    <property type="entry name" value="F-box"/>
    <property type="match status" value="1"/>
</dbReference>
<dbReference type="SMART" id="SM00256">
    <property type="entry name" value="FBOX"/>
    <property type="match status" value="1"/>
</dbReference>
<dbReference type="SUPFAM" id="SSF81383">
    <property type="entry name" value="F-box domain"/>
    <property type="match status" value="1"/>
</dbReference>
<dbReference type="PROSITE" id="PS50181">
    <property type="entry name" value="FBOX"/>
    <property type="match status" value="1"/>
</dbReference>
<feature type="chain" id="PRO_0000283529" description="F-box protein At5g25290">
    <location>
        <begin position="1"/>
        <end position="397"/>
    </location>
</feature>
<feature type="domain" description="F-box" evidence="1">
    <location>
        <begin position="11"/>
        <end position="56"/>
    </location>
</feature>
<proteinExistence type="evidence at transcript level"/>
<organism>
    <name type="scientific">Arabidopsis thaliana</name>
    <name type="common">Mouse-ear cress</name>
    <dbReference type="NCBI Taxonomy" id="3702"/>
    <lineage>
        <taxon>Eukaryota</taxon>
        <taxon>Viridiplantae</taxon>
        <taxon>Streptophyta</taxon>
        <taxon>Embryophyta</taxon>
        <taxon>Tracheophyta</taxon>
        <taxon>Spermatophyta</taxon>
        <taxon>Magnoliopsida</taxon>
        <taxon>eudicotyledons</taxon>
        <taxon>Gunneridae</taxon>
        <taxon>Pentapetalae</taxon>
        <taxon>rosids</taxon>
        <taxon>malvids</taxon>
        <taxon>Brassicales</taxon>
        <taxon>Brassicaceae</taxon>
        <taxon>Camelineae</taxon>
        <taxon>Arabidopsis</taxon>
    </lineage>
</organism>